<proteinExistence type="inferred from homology"/>
<accession>Q57LD0</accession>
<reference key="1">
    <citation type="journal article" date="2005" name="Nucleic Acids Res.">
        <title>The genome sequence of Salmonella enterica serovar Choleraesuis, a highly invasive and resistant zoonotic pathogen.</title>
        <authorList>
            <person name="Chiu C.-H."/>
            <person name="Tang P."/>
            <person name="Chu C."/>
            <person name="Hu S."/>
            <person name="Bao Q."/>
            <person name="Yu J."/>
            <person name="Chou Y.-Y."/>
            <person name="Wang H.-S."/>
            <person name="Lee Y.-S."/>
        </authorList>
    </citation>
    <scope>NUCLEOTIDE SEQUENCE [LARGE SCALE GENOMIC DNA]</scope>
    <source>
        <strain>SC-B67</strain>
    </source>
</reference>
<organism>
    <name type="scientific">Salmonella choleraesuis (strain SC-B67)</name>
    <dbReference type="NCBI Taxonomy" id="321314"/>
    <lineage>
        <taxon>Bacteria</taxon>
        <taxon>Pseudomonadati</taxon>
        <taxon>Pseudomonadota</taxon>
        <taxon>Gammaproteobacteria</taxon>
        <taxon>Enterobacterales</taxon>
        <taxon>Enterobacteriaceae</taxon>
        <taxon>Salmonella</taxon>
    </lineage>
</organism>
<keyword id="KW-0963">Cytoplasm</keyword>
<keyword id="KW-0255">Endonuclease</keyword>
<keyword id="KW-0378">Hydrolase</keyword>
<keyword id="KW-0460">Magnesium</keyword>
<keyword id="KW-0479">Metal-binding</keyword>
<keyword id="KW-0507">mRNA processing</keyword>
<keyword id="KW-0540">Nuclease</keyword>
<keyword id="KW-0694">RNA-binding</keyword>
<keyword id="KW-0698">rRNA processing</keyword>
<keyword id="KW-0699">rRNA-binding</keyword>
<keyword id="KW-0819">tRNA processing</keyword>
<evidence type="ECO:0000255" key="1">
    <source>
        <dbReference type="HAMAP-Rule" id="MF_00104"/>
    </source>
</evidence>
<evidence type="ECO:0000305" key="2"/>
<protein>
    <recommendedName>
        <fullName evidence="1">Ribonuclease 3</fullName>
        <ecNumber evidence="1">3.1.26.3</ecNumber>
    </recommendedName>
    <alternativeName>
        <fullName evidence="1">Ribonuclease III</fullName>
        <shortName evidence="1">RNase III</shortName>
    </alternativeName>
</protein>
<gene>
    <name evidence="1" type="primary">rnc</name>
    <name type="ordered locus">SCH_2576</name>
</gene>
<comment type="function">
    <text evidence="1">Digests double-stranded RNA. Involved in the processing of primary rRNA transcript to yield the immediate precursors to the large and small rRNAs (23S and 16S). Processes some mRNAs, and tRNAs when they are encoded in the rRNA operon. Processes pre-crRNA and tracrRNA of type II CRISPR loci if present in the organism.</text>
</comment>
<comment type="catalytic activity">
    <reaction evidence="1">
        <text>Endonucleolytic cleavage to 5'-phosphomonoester.</text>
        <dbReference type="EC" id="3.1.26.3"/>
    </reaction>
</comment>
<comment type="cofactor">
    <cofactor evidence="1">
        <name>Mg(2+)</name>
        <dbReference type="ChEBI" id="CHEBI:18420"/>
    </cofactor>
</comment>
<comment type="subunit">
    <text evidence="1">Homodimer.</text>
</comment>
<comment type="subcellular location">
    <subcellularLocation>
        <location evidence="1">Cytoplasm</location>
    </subcellularLocation>
</comment>
<comment type="similarity">
    <text evidence="1">Belongs to the ribonuclease III family.</text>
</comment>
<comment type="sequence caution" evidence="2">
    <conflict type="erroneous initiation">
        <sequence resource="EMBL-CDS" id="AAX66482"/>
    </conflict>
    <text>Extended N-terminus.</text>
</comment>
<name>RNC_SALCH</name>
<sequence length="226" mass="25565">MNPIVINRLQRKLGYTFNHQELLQQALTHRSASSKHNERLEFLGDSILSFVIANALYHRFPRVDEGDMSRMRATLVRGNTLAELAREFDLGECLRLGPGELKSGGFRRESILADTMEALIGGVFLDSNIQTVEQLILNWYKTRLDEISPGDKQKDPKTRLQEYLQGRHLPLPSYLVVQVRGEAHDQEFTIHCQVSGLSEPVVGTGSSRRKAEQAAAEQVLKKLELE</sequence>
<feature type="chain" id="PRO_0000228577" description="Ribonuclease 3">
    <location>
        <begin position="1"/>
        <end position="226"/>
    </location>
</feature>
<feature type="domain" description="RNase III" evidence="1">
    <location>
        <begin position="6"/>
        <end position="128"/>
    </location>
</feature>
<feature type="domain" description="DRBM" evidence="1">
    <location>
        <begin position="155"/>
        <end position="225"/>
    </location>
</feature>
<feature type="active site" evidence="1">
    <location>
        <position position="45"/>
    </location>
</feature>
<feature type="active site" evidence="1">
    <location>
        <position position="117"/>
    </location>
</feature>
<feature type="binding site" evidence="1">
    <location>
        <position position="41"/>
    </location>
    <ligand>
        <name>Mg(2+)</name>
        <dbReference type="ChEBI" id="CHEBI:18420"/>
    </ligand>
</feature>
<feature type="binding site" evidence="1">
    <location>
        <position position="114"/>
    </location>
    <ligand>
        <name>Mg(2+)</name>
        <dbReference type="ChEBI" id="CHEBI:18420"/>
    </ligand>
</feature>
<feature type="binding site" evidence="1">
    <location>
        <position position="117"/>
    </location>
    <ligand>
        <name>Mg(2+)</name>
        <dbReference type="ChEBI" id="CHEBI:18420"/>
    </ligand>
</feature>
<dbReference type="EC" id="3.1.26.3" evidence="1"/>
<dbReference type="EMBL" id="AE017220">
    <property type="protein sequence ID" value="AAX66482.1"/>
    <property type="status" value="ALT_INIT"/>
    <property type="molecule type" value="Genomic_DNA"/>
</dbReference>
<dbReference type="RefSeq" id="WP_024131346.1">
    <property type="nucleotide sequence ID" value="NC_006905.1"/>
</dbReference>
<dbReference type="SMR" id="Q57LD0"/>
<dbReference type="KEGG" id="sec:SCH_2576"/>
<dbReference type="HOGENOM" id="CLU_000907_1_1_6"/>
<dbReference type="Proteomes" id="UP000000538">
    <property type="component" value="Chromosome"/>
</dbReference>
<dbReference type="GO" id="GO:0005737">
    <property type="term" value="C:cytoplasm"/>
    <property type="evidence" value="ECO:0007669"/>
    <property type="project" value="UniProtKB-SubCell"/>
</dbReference>
<dbReference type="GO" id="GO:0003725">
    <property type="term" value="F:double-stranded RNA binding"/>
    <property type="evidence" value="ECO:0007669"/>
    <property type="project" value="TreeGrafter"/>
</dbReference>
<dbReference type="GO" id="GO:0046872">
    <property type="term" value="F:metal ion binding"/>
    <property type="evidence" value="ECO:0007669"/>
    <property type="project" value="UniProtKB-KW"/>
</dbReference>
<dbReference type="GO" id="GO:0004525">
    <property type="term" value="F:ribonuclease III activity"/>
    <property type="evidence" value="ECO:0007669"/>
    <property type="project" value="UniProtKB-UniRule"/>
</dbReference>
<dbReference type="GO" id="GO:0019843">
    <property type="term" value="F:rRNA binding"/>
    <property type="evidence" value="ECO:0007669"/>
    <property type="project" value="UniProtKB-KW"/>
</dbReference>
<dbReference type="GO" id="GO:0006397">
    <property type="term" value="P:mRNA processing"/>
    <property type="evidence" value="ECO:0007669"/>
    <property type="project" value="UniProtKB-UniRule"/>
</dbReference>
<dbReference type="GO" id="GO:0010468">
    <property type="term" value="P:regulation of gene expression"/>
    <property type="evidence" value="ECO:0007669"/>
    <property type="project" value="TreeGrafter"/>
</dbReference>
<dbReference type="GO" id="GO:0006364">
    <property type="term" value="P:rRNA processing"/>
    <property type="evidence" value="ECO:0007669"/>
    <property type="project" value="UniProtKB-UniRule"/>
</dbReference>
<dbReference type="GO" id="GO:0008033">
    <property type="term" value="P:tRNA processing"/>
    <property type="evidence" value="ECO:0007669"/>
    <property type="project" value="UniProtKB-KW"/>
</dbReference>
<dbReference type="CDD" id="cd10845">
    <property type="entry name" value="DSRM_RNAse_III_family"/>
    <property type="match status" value="1"/>
</dbReference>
<dbReference type="CDD" id="cd00593">
    <property type="entry name" value="RIBOc"/>
    <property type="match status" value="1"/>
</dbReference>
<dbReference type="FunFam" id="1.10.1520.10:FF:000001">
    <property type="entry name" value="Ribonuclease 3"/>
    <property type="match status" value="1"/>
</dbReference>
<dbReference type="FunFam" id="3.30.160.20:FF:000003">
    <property type="entry name" value="Ribonuclease 3"/>
    <property type="match status" value="1"/>
</dbReference>
<dbReference type="Gene3D" id="3.30.160.20">
    <property type="match status" value="1"/>
</dbReference>
<dbReference type="Gene3D" id="1.10.1520.10">
    <property type="entry name" value="Ribonuclease III domain"/>
    <property type="match status" value="1"/>
</dbReference>
<dbReference type="HAMAP" id="MF_00104">
    <property type="entry name" value="RNase_III"/>
    <property type="match status" value="1"/>
</dbReference>
<dbReference type="InterPro" id="IPR014720">
    <property type="entry name" value="dsRBD_dom"/>
</dbReference>
<dbReference type="InterPro" id="IPR011907">
    <property type="entry name" value="RNase_III"/>
</dbReference>
<dbReference type="InterPro" id="IPR000999">
    <property type="entry name" value="RNase_III_dom"/>
</dbReference>
<dbReference type="InterPro" id="IPR036389">
    <property type="entry name" value="RNase_III_sf"/>
</dbReference>
<dbReference type="NCBIfam" id="TIGR02191">
    <property type="entry name" value="RNaseIII"/>
    <property type="match status" value="1"/>
</dbReference>
<dbReference type="PANTHER" id="PTHR11207:SF0">
    <property type="entry name" value="RIBONUCLEASE 3"/>
    <property type="match status" value="1"/>
</dbReference>
<dbReference type="PANTHER" id="PTHR11207">
    <property type="entry name" value="RIBONUCLEASE III"/>
    <property type="match status" value="1"/>
</dbReference>
<dbReference type="Pfam" id="PF00035">
    <property type="entry name" value="dsrm"/>
    <property type="match status" value="1"/>
</dbReference>
<dbReference type="Pfam" id="PF14622">
    <property type="entry name" value="Ribonucleas_3_3"/>
    <property type="match status" value="1"/>
</dbReference>
<dbReference type="SMART" id="SM00358">
    <property type="entry name" value="DSRM"/>
    <property type="match status" value="1"/>
</dbReference>
<dbReference type="SMART" id="SM00535">
    <property type="entry name" value="RIBOc"/>
    <property type="match status" value="1"/>
</dbReference>
<dbReference type="SUPFAM" id="SSF54768">
    <property type="entry name" value="dsRNA-binding domain-like"/>
    <property type="match status" value="1"/>
</dbReference>
<dbReference type="SUPFAM" id="SSF69065">
    <property type="entry name" value="RNase III domain-like"/>
    <property type="match status" value="1"/>
</dbReference>
<dbReference type="PROSITE" id="PS50137">
    <property type="entry name" value="DS_RBD"/>
    <property type="match status" value="1"/>
</dbReference>
<dbReference type="PROSITE" id="PS00517">
    <property type="entry name" value="RNASE_3_1"/>
    <property type="match status" value="1"/>
</dbReference>
<dbReference type="PROSITE" id="PS50142">
    <property type="entry name" value="RNASE_3_2"/>
    <property type="match status" value="1"/>
</dbReference>